<proteinExistence type="inferred from homology"/>
<organism>
    <name type="scientific">Agrobacterium fabrum (strain C58 / ATCC 33970)</name>
    <name type="common">Agrobacterium tumefaciens (strain C58)</name>
    <dbReference type="NCBI Taxonomy" id="176299"/>
    <lineage>
        <taxon>Bacteria</taxon>
        <taxon>Pseudomonadati</taxon>
        <taxon>Pseudomonadota</taxon>
        <taxon>Alphaproteobacteria</taxon>
        <taxon>Hyphomicrobiales</taxon>
        <taxon>Rhizobiaceae</taxon>
        <taxon>Rhizobium/Agrobacterium group</taxon>
        <taxon>Agrobacterium</taxon>
        <taxon>Agrobacterium tumefaciens complex</taxon>
    </lineage>
</organism>
<feature type="chain" id="PRO_0000190675" description="UPF0758 protein Atu1607">
    <location>
        <begin position="1"/>
        <end position="280"/>
    </location>
</feature>
<feature type="domain" description="MPN" evidence="1">
    <location>
        <begin position="158"/>
        <end position="280"/>
    </location>
</feature>
<feature type="region of interest" description="Disordered" evidence="2">
    <location>
        <begin position="1"/>
        <end position="22"/>
    </location>
</feature>
<feature type="short sequence motif" description="JAMM motif" evidence="1">
    <location>
        <begin position="229"/>
        <end position="242"/>
    </location>
</feature>
<feature type="binding site" evidence="1">
    <location>
        <position position="229"/>
    </location>
    <ligand>
        <name>Zn(2+)</name>
        <dbReference type="ChEBI" id="CHEBI:29105"/>
        <note>catalytic</note>
    </ligand>
</feature>
<feature type="binding site" evidence="1">
    <location>
        <position position="231"/>
    </location>
    <ligand>
        <name>Zn(2+)</name>
        <dbReference type="ChEBI" id="CHEBI:29105"/>
        <note>catalytic</note>
    </ligand>
</feature>
<feature type="binding site" evidence="1">
    <location>
        <position position="242"/>
    </location>
    <ligand>
        <name>Zn(2+)</name>
        <dbReference type="ChEBI" id="CHEBI:29105"/>
        <note>catalytic</note>
    </ligand>
</feature>
<sequence>MAKRPALPSADLSPTSGFEAGEGDLFNGADERGFFAEPRSAPKKAARAVTATEQEADAAHYHGHRDRLRTRYRDGGDAALADYELLELLLFRLIPRRDTKPIAKALIARFGTLGSVLGAPLPLLQEVKGVGEAVALDLKLVASVSQRMLKSEIRNKQVLGSWSSVIDYCHAAMAHETREQFRILFLDKRNVLIADEVQGQGTVDHTPVYPREIVRRALELSSTALILIHNHPSGDPTPSRADIEMTKTIIDTAKPLGITVHDHIIIGKDGHASFKGLRLI</sequence>
<keyword id="KW-0378">Hydrolase</keyword>
<keyword id="KW-0479">Metal-binding</keyword>
<keyword id="KW-0482">Metalloprotease</keyword>
<keyword id="KW-0645">Protease</keyword>
<keyword id="KW-1185">Reference proteome</keyword>
<keyword id="KW-0862">Zinc</keyword>
<accession>Q8UEZ6</accession>
<name>Y1607_AGRFC</name>
<protein>
    <recommendedName>
        <fullName>UPF0758 protein Atu1607</fullName>
    </recommendedName>
</protein>
<evidence type="ECO:0000255" key="1">
    <source>
        <dbReference type="PROSITE-ProRule" id="PRU01182"/>
    </source>
</evidence>
<evidence type="ECO:0000256" key="2">
    <source>
        <dbReference type="SAM" id="MobiDB-lite"/>
    </source>
</evidence>
<evidence type="ECO:0000305" key="3"/>
<reference key="1">
    <citation type="journal article" date="2001" name="Science">
        <title>The genome of the natural genetic engineer Agrobacterium tumefaciens C58.</title>
        <authorList>
            <person name="Wood D.W."/>
            <person name="Setubal J.C."/>
            <person name="Kaul R."/>
            <person name="Monks D.E."/>
            <person name="Kitajima J.P."/>
            <person name="Okura V.K."/>
            <person name="Zhou Y."/>
            <person name="Chen L."/>
            <person name="Wood G.E."/>
            <person name="Almeida N.F. Jr."/>
            <person name="Woo L."/>
            <person name="Chen Y."/>
            <person name="Paulsen I.T."/>
            <person name="Eisen J.A."/>
            <person name="Karp P.D."/>
            <person name="Bovee D. Sr."/>
            <person name="Chapman P."/>
            <person name="Clendenning J."/>
            <person name="Deatherage G."/>
            <person name="Gillet W."/>
            <person name="Grant C."/>
            <person name="Kutyavin T."/>
            <person name="Levy R."/>
            <person name="Li M.-J."/>
            <person name="McClelland E."/>
            <person name="Palmieri A."/>
            <person name="Raymond C."/>
            <person name="Rouse G."/>
            <person name="Saenphimmachak C."/>
            <person name="Wu Z."/>
            <person name="Romero P."/>
            <person name="Gordon D."/>
            <person name="Zhang S."/>
            <person name="Yoo H."/>
            <person name="Tao Y."/>
            <person name="Biddle P."/>
            <person name="Jung M."/>
            <person name="Krespan W."/>
            <person name="Perry M."/>
            <person name="Gordon-Kamm B."/>
            <person name="Liao L."/>
            <person name="Kim S."/>
            <person name="Hendrick C."/>
            <person name="Zhao Z.-Y."/>
            <person name="Dolan M."/>
            <person name="Chumley F."/>
            <person name="Tingey S.V."/>
            <person name="Tomb J.-F."/>
            <person name="Gordon M.P."/>
            <person name="Olson M.V."/>
            <person name="Nester E.W."/>
        </authorList>
    </citation>
    <scope>NUCLEOTIDE SEQUENCE [LARGE SCALE GENOMIC DNA]</scope>
    <source>
        <strain>C58 / ATCC 33970</strain>
    </source>
</reference>
<reference key="2">
    <citation type="journal article" date="2001" name="Science">
        <title>Genome sequence of the plant pathogen and biotechnology agent Agrobacterium tumefaciens C58.</title>
        <authorList>
            <person name="Goodner B."/>
            <person name="Hinkle G."/>
            <person name="Gattung S."/>
            <person name="Miller N."/>
            <person name="Blanchard M."/>
            <person name="Qurollo B."/>
            <person name="Goldman B.S."/>
            <person name="Cao Y."/>
            <person name="Askenazi M."/>
            <person name="Halling C."/>
            <person name="Mullin L."/>
            <person name="Houmiel K."/>
            <person name="Gordon J."/>
            <person name="Vaudin M."/>
            <person name="Iartchouk O."/>
            <person name="Epp A."/>
            <person name="Liu F."/>
            <person name="Wollam C."/>
            <person name="Allinger M."/>
            <person name="Doughty D."/>
            <person name="Scott C."/>
            <person name="Lappas C."/>
            <person name="Markelz B."/>
            <person name="Flanagan C."/>
            <person name="Crowell C."/>
            <person name="Gurson J."/>
            <person name="Lomo C."/>
            <person name="Sear C."/>
            <person name="Strub G."/>
            <person name="Cielo C."/>
            <person name="Slater S."/>
        </authorList>
    </citation>
    <scope>NUCLEOTIDE SEQUENCE [LARGE SCALE GENOMIC DNA]</scope>
    <source>
        <strain>C58 / ATCC 33970</strain>
    </source>
</reference>
<gene>
    <name type="ordered locus">Atu1607</name>
    <name type="ORF">AGR_C_2959</name>
</gene>
<dbReference type="EMBL" id="AE007869">
    <property type="protein sequence ID" value="AAK87386.2"/>
    <property type="molecule type" value="Genomic_DNA"/>
</dbReference>
<dbReference type="PIR" id="A97554">
    <property type="entry name" value="A97554"/>
</dbReference>
<dbReference type="PIR" id="AC2774">
    <property type="entry name" value="AC2774"/>
</dbReference>
<dbReference type="RefSeq" id="NP_354601.2">
    <property type="nucleotide sequence ID" value="NC_003062.2"/>
</dbReference>
<dbReference type="RefSeq" id="WP_010971736.1">
    <property type="nucleotide sequence ID" value="NC_003062.2"/>
</dbReference>
<dbReference type="SMR" id="Q8UEZ6"/>
<dbReference type="STRING" id="176299.Atu1607"/>
<dbReference type="EnsemblBacteria" id="AAK87386">
    <property type="protein sequence ID" value="AAK87386"/>
    <property type="gene ID" value="Atu1607"/>
</dbReference>
<dbReference type="GeneID" id="1133645"/>
<dbReference type="KEGG" id="atu:Atu1607"/>
<dbReference type="PATRIC" id="fig|176299.10.peg.1625"/>
<dbReference type="eggNOG" id="COG2003">
    <property type="taxonomic scope" value="Bacteria"/>
</dbReference>
<dbReference type="HOGENOM" id="CLU_073529_0_0_5"/>
<dbReference type="OrthoDB" id="9804482at2"/>
<dbReference type="PhylomeDB" id="Q8UEZ6"/>
<dbReference type="Proteomes" id="UP000000813">
    <property type="component" value="Chromosome circular"/>
</dbReference>
<dbReference type="GO" id="GO:0046872">
    <property type="term" value="F:metal ion binding"/>
    <property type="evidence" value="ECO:0007669"/>
    <property type="project" value="UniProtKB-KW"/>
</dbReference>
<dbReference type="GO" id="GO:0008237">
    <property type="term" value="F:metallopeptidase activity"/>
    <property type="evidence" value="ECO:0007669"/>
    <property type="project" value="UniProtKB-KW"/>
</dbReference>
<dbReference type="GO" id="GO:0006508">
    <property type="term" value="P:proteolysis"/>
    <property type="evidence" value="ECO:0007669"/>
    <property type="project" value="UniProtKB-KW"/>
</dbReference>
<dbReference type="CDD" id="cd08071">
    <property type="entry name" value="MPN_DUF2466"/>
    <property type="match status" value="1"/>
</dbReference>
<dbReference type="Gene3D" id="3.40.140.10">
    <property type="entry name" value="Cytidine Deaminase, domain 2"/>
    <property type="match status" value="1"/>
</dbReference>
<dbReference type="InterPro" id="IPR037518">
    <property type="entry name" value="MPN"/>
</dbReference>
<dbReference type="InterPro" id="IPR025657">
    <property type="entry name" value="RadC_JAB"/>
</dbReference>
<dbReference type="InterPro" id="IPR010994">
    <property type="entry name" value="RuvA_2-like"/>
</dbReference>
<dbReference type="InterPro" id="IPR001405">
    <property type="entry name" value="UPF0758"/>
</dbReference>
<dbReference type="InterPro" id="IPR020891">
    <property type="entry name" value="UPF0758_CS"/>
</dbReference>
<dbReference type="NCBIfam" id="NF000642">
    <property type="entry name" value="PRK00024.1"/>
    <property type="match status" value="1"/>
</dbReference>
<dbReference type="NCBIfam" id="TIGR00608">
    <property type="entry name" value="radc"/>
    <property type="match status" value="1"/>
</dbReference>
<dbReference type="PANTHER" id="PTHR30471">
    <property type="entry name" value="DNA REPAIR PROTEIN RADC"/>
    <property type="match status" value="1"/>
</dbReference>
<dbReference type="PANTHER" id="PTHR30471:SF3">
    <property type="entry name" value="UPF0758 PROTEIN YEES-RELATED"/>
    <property type="match status" value="1"/>
</dbReference>
<dbReference type="Pfam" id="PF04002">
    <property type="entry name" value="RadC"/>
    <property type="match status" value="1"/>
</dbReference>
<dbReference type="SUPFAM" id="SSF102712">
    <property type="entry name" value="JAB1/MPN domain"/>
    <property type="match status" value="1"/>
</dbReference>
<dbReference type="SUPFAM" id="SSF47781">
    <property type="entry name" value="RuvA domain 2-like"/>
    <property type="match status" value="1"/>
</dbReference>
<dbReference type="PROSITE" id="PS50249">
    <property type="entry name" value="MPN"/>
    <property type="match status" value="1"/>
</dbReference>
<dbReference type="PROSITE" id="PS01302">
    <property type="entry name" value="UPF0758"/>
    <property type="match status" value="1"/>
</dbReference>
<comment type="similarity">
    <text evidence="3">Belongs to the UPF0758 family.</text>
</comment>